<dbReference type="EMBL" id="AAFI02000064">
    <property type="protein sequence ID" value="EAL65280.1"/>
    <property type="molecule type" value="Genomic_DNA"/>
</dbReference>
<dbReference type="EMBL" id="U66369">
    <property type="protein sequence ID" value="AAB06761.1"/>
    <property type="molecule type" value="mRNA"/>
</dbReference>
<dbReference type="RefSeq" id="XP_638706.1">
    <property type="nucleotide sequence ID" value="XM_633614.1"/>
</dbReference>
<dbReference type="SMR" id="Q54PT9"/>
<dbReference type="FunCoup" id="Q54PT9">
    <property type="interactions" value="19"/>
</dbReference>
<dbReference type="STRING" id="44689.Q54PT9"/>
<dbReference type="PaxDb" id="44689-DDB0191426"/>
<dbReference type="EnsemblProtists" id="EAL65280">
    <property type="protein sequence ID" value="EAL65280"/>
    <property type="gene ID" value="DDB_G0284183"/>
</dbReference>
<dbReference type="GeneID" id="8624537"/>
<dbReference type="KEGG" id="ddi:DDB_G0284183"/>
<dbReference type="dictyBase" id="DDB_G0284183">
    <property type="gene designation" value="mrfA"/>
</dbReference>
<dbReference type="VEuPathDB" id="AmoebaDB:DDB_G0284183"/>
<dbReference type="eggNOG" id="KOG3661">
    <property type="taxonomic scope" value="Eukaryota"/>
</dbReference>
<dbReference type="HOGENOM" id="CLU_314093_0_0_1"/>
<dbReference type="InParanoid" id="Q54PT9"/>
<dbReference type="OMA" id="EYCIVSY"/>
<dbReference type="PhylomeDB" id="Q54PT9"/>
<dbReference type="PRO" id="PR:Q54PT9"/>
<dbReference type="Proteomes" id="UP000002195">
    <property type="component" value="Chromosome 4"/>
</dbReference>
<dbReference type="GO" id="GO:0005737">
    <property type="term" value="C:cytoplasm"/>
    <property type="evidence" value="ECO:0000314"/>
    <property type="project" value="dictyBase"/>
</dbReference>
<dbReference type="GO" id="GO:0005789">
    <property type="term" value="C:endoplasmic reticulum membrane"/>
    <property type="evidence" value="ECO:0000318"/>
    <property type="project" value="GO_Central"/>
</dbReference>
<dbReference type="GO" id="GO:0005634">
    <property type="term" value="C:nucleus"/>
    <property type="evidence" value="ECO:0000314"/>
    <property type="project" value="dictyBase"/>
</dbReference>
<dbReference type="GO" id="GO:0003700">
    <property type="term" value="F:DNA-binding transcription factor activity"/>
    <property type="evidence" value="ECO:0000315"/>
    <property type="project" value="UniProtKB"/>
</dbReference>
<dbReference type="GO" id="GO:0043565">
    <property type="term" value="F:sequence-specific DNA binding"/>
    <property type="evidence" value="ECO:0000314"/>
    <property type="project" value="UniProtKB"/>
</dbReference>
<dbReference type="GO" id="GO:0045893">
    <property type="term" value="P:positive regulation of DNA-templated transcription"/>
    <property type="evidence" value="ECO:0000315"/>
    <property type="project" value="dictyBase"/>
</dbReference>
<dbReference type="GO" id="GO:0016540">
    <property type="term" value="P:protein autoprocessing"/>
    <property type="evidence" value="ECO:0000318"/>
    <property type="project" value="GO_Central"/>
</dbReference>
<dbReference type="GO" id="GO:0031285">
    <property type="term" value="P:regulation of sorocarp stalk cell differentiation"/>
    <property type="evidence" value="ECO:0000315"/>
    <property type="project" value="dictyBase"/>
</dbReference>
<dbReference type="FunFam" id="2.60.40.1390:FF:000012">
    <property type="entry name" value="Myelin gene regulatory factor-like A"/>
    <property type="match status" value="1"/>
</dbReference>
<dbReference type="Gene3D" id="2.60.40.1390">
    <property type="entry name" value="NDT80 DNA-binding domain"/>
    <property type="match status" value="1"/>
</dbReference>
<dbReference type="InterPro" id="IPR051577">
    <property type="entry name" value="MRF-like"/>
</dbReference>
<dbReference type="InterPro" id="IPR024061">
    <property type="entry name" value="NDT80_DNA-bd_dom"/>
</dbReference>
<dbReference type="InterPro" id="IPR037141">
    <property type="entry name" value="NDT80_DNA-bd_dom_sf"/>
</dbReference>
<dbReference type="InterPro" id="IPR008967">
    <property type="entry name" value="p53-like_TF_DNA-bd_sf"/>
</dbReference>
<dbReference type="InterPro" id="IPR030392">
    <property type="entry name" value="S74_ICA"/>
</dbReference>
<dbReference type="PANTHER" id="PTHR13029">
    <property type="match status" value="1"/>
</dbReference>
<dbReference type="PANTHER" id="PTHR13029:SF20">
    <property type="entry name" value="MYELIN GENE REGULATORY FACTOR-LIKE A"/>
    <property type="match status" value="1"/>
</dbReference>
<dbReference type="Pfam" id="PF05224">
    <property type="entry name" value="NDT80_PhoG"/>
    <property type="match status" value="1"/>
</dbReference>
<dbReference type="Pfam" id="PF13884">
    <property type="entry name" value="Peptidase_S74"/>
    <property type="match status" value="1"/>
</dbReference>
<dbReference type="SUPFAM" id="SSF49417">
    <property type="entry name" value="p53-like transcription factors"/>
    <property type="match status" value="1"/>
</dbReference>
<dbReference type="PROSITE" id="PS51688">
    <property type="entry name" value="ICA"/>
    <property type="match status" value="1"/>
</dbReference>
<dbReference type="PROSITE" id="PS51517">
    <property type="entry name" value="NDT80"/>
    <property type="match status" value="1"/>
</dbReference>
<sequence>MDGYNQQQQQQQQQQQQHQMNLGSSGGILHSPQQQQQQQQQQQQQQQQPMNGSNNQLLGISNGGFGTMLQQSASLPINIQGSNSFSTFTPLSADDSNLKKRKIKNEDGTYSEIPYSPNSLVGSNGGLDSSFLMLQQQLQDQQQQIAQFNSSVNSPSFSLNSSQVNNNNNNNNNINNNNNSNNNINNNNSNNNINNNNNNNNNNNNNINNNNINNNNNYNNNNNNNNHNHLQTTTTTTTNNGLTINANNTPSQLSSSSLYPGIIPQISITNTQSGYTPRSISPNPSPNLSPTNSPIQSPHLPTDNYLMIGSENENSDPPSPMTQYNENPPFTWTDYKSEPWYTTFNTNGDEMPVPLLNIMASKGFSYIGGQWIYCRRNHFQLDITAVYPKLFQETQYGHNGVTLSNSSSSVDPTQTPSYMLISGVKTPINGLTLTIKGIKNRADMSQQESEVELFQTNSKREKQGEHAPKPVAIQFGSLVSIQRLHFRKATLNNARRHGQPNPHQEFNQLVVSLYGRCMGQEYCIVSYVSPALIVRTATQVTPPGDLSPVHTPDYAGTSSNNGGGSNNMNCFGPTISNIDFSTMNIVSPGHSPTSPRPLSQLTSQGQTNILRLTQNHNNNNNNNNNNNNNNNNNNNNNNNNNINNNNNSNNNSLGNINNNNSNMLTSSSLLNGRINCFNNNINNNNNNQHNNNNQHNNNNNHHNINNQHNNQNNNNNNNNNNKCHWNSGDTEKSIVYNGKVGINVENPAYALSVQGTIYASEGVYHPSDLRIKYDLKSIDSKSNLDNVNRMKLYDYKYNPQWTHMNGRDPYLDNCDRGVIAQDLQRILPNAVRTIGNKNVNGQEIENLLVIKNEALVMETIGATQELSKQMDEMKLKLITYESKLKNLKKKSKNQTILLIIFMITFLLVALYMYKPSTHHSHHRRHNFDNNDN</sequence>
<feature type="chain" id="PRO_0000371411" description="Myelin gene regulatory factor-like A">
    <location>
        <begin position="1"/>
        <end position="932"/>
    </location>
</feature>
<feature type="transmembrane region" description="Helical" evidence="1">
    <location>
        <begin position="895"/>
        <end position="915"/>
    </location>
</feature>
<feature type="domain" description="Peptidase S74" evidence="3">
    <location>
        <begin position="767"/>
        <end position="877"/>
    </location>
</feature>
<feature type="DNA-binding region" description="NDT80" evidence="2">
    <location>
        <begin position="286"/>
        <end position="546"/>
    </location>
</feature>
<feature type="region of interest" description="Disordered" evidence="4">
    <location>
        <begin position="1"/>
        <end position="63"/>
    </location>
</feature>
<feature type="region of interest" description="Disordered" evidence="4">
    <location>
        <begin position="152"/>
        <end position="256"/>
    </location>
</feature>
<feature type="region of interest" description="Disordered" evidence="4">
    <location>
        <begin position="269"/>
        <end position="328"/>
    </location>
</feature>
<feature type="region of interest" description="Disordered" evidence="4">
    <location>
        <begin position="540"/>
        <end position="568"/>
    </location>
</feature>
<feature type="region of interest" description="Disordered" evidence="4">
    <location>
        <begin position="582"/>
        <end position="601"/>
    </location>
</feature>
<feature type="region of interest" description="Disordered" evidence="4">
    <location>
        <begin position="613"/>
        <end position="660"/>
    </location>
</feature>
<feature type="region of interest" description="Disordered" evidence="4">
    <location>
        <begin position="680"/>
        <end position="726"/>
    </location>
</feature>
<feature type="coiled-coil region" evidence="1">
    <location>
        <begin position="127"/>
        <end position="154"/>
    </location>
</feature>
<feature type="coiled-coil region" evidence="1">
    <location>
        <begin position="863"/>
        <end position="895"/>
    </location>
</feature>
<feature type="compositionally biased region" description="Low complexity" evidence="4">
    <location>
        <begin position="1"/>
        <end position="19"/>
    </location>
</feature>
<feature type="compositionally biased region" description="Low complexity" evidence="4">
    <location>
        <begin position="33"/>
        <end position="48"/>
    </location>
</feature>
<feature type="compositionally biased region" description="Polar residues" evidence="4">
    <location>
        <begin position="49"/>
        <end position="59"/>
    </location>
</feature>
<feature type="compositionally biased region" description="Low complexity" evidence="4">
    <location>
        <begin position="152"/>
        <end position="249"/>
    </location>
</feature>
<feature type="compositionally biased region" description="Low complexity" evidence="4">
    <location>
        <begin position="277"/>
        <end position="294"/>
    </location>
</feature>
<feature type="compositionally biased region" description="Polar residues" evidence="4">
    <location>
        <begin position="311"/>
        <end position="328"/>
    </location>
</feature>
<feature type="compositionally biased region" description="Low complexity" evidence="4">
    <location>
        <begin position="615"/>
        <end position="660"/>
    </location>
</feature>
<feature type="compositionally biased region" description="Low complexity" evidence="4">
    <location>
        <begin position="680"/>
        <end position="721"/>
    </location>
</feature>
<feature type="mutagenesis site" description="Loss of binding to ecmA promoter." evidence="6">
    <original>R</original>
    <variation>A</variation>
    <location>
        <position position="376"/>
    </location>
</feature>
<feature type="mutagenesis site" description="Loss of binding to ecmA promoter." evidence="6">
    <original>R</original>
    <variation>A</variation>
    <location>
        <position position="460"/>
    </location>
</feature>
<feature type="sequence conflict" description="In Ref. 2; AAB06761." evidence="7" ref="2">
    <original>N</original>
    <variation>NN</variation>
    <location>
        <position position="641"/>
    </location>
</feature>
<feature type="sequence conflict" description="In Ref. 2; AAB06761." evidence="7" ref="2">
    <original>NA</original>
    <variation>KT</variation>
    <location>
        <begin position="829"/>
        <end position="830"/>
    </location>
</feature>
<accession>Q54PT9</accession>
<accession>Q94474</accession>
<protein>
    <recommendedName>
        <fullName>Myelin gene regulatory factor-like A</fullName>
    </recommendedName>
</protein>
<gene>
    <name type="primary">mrfA</name>
    <name type="synonym">rcdK</name>
    <name type="ORF">DDB_G0284183</name>
</gene>
<reference key="1">
    <citation type="journal article" date="2005" name="Nature">
        <title>The genome of the social amoeba Dictyostelium discoideum.</title>
        <authorList>
            <person name="Eichinger L."/>
            <person name="Pachebat J.A."/>
            <person name="Gloeckner G."/>
            <person name="Rajandream M.A."/>
            <person name="Sucgang R."/>
            <person name="Berriman M."/>
            <person name="Song J."/>
            <person name="Olsen R."/>
            <person name="Szafranski K."/>
            <person name="Xu Q."/>
            <person name="Tunggal B."/>
            <person name="Kummerfeld S."/>
            <person name="Madera M."/>
            <person name="Konfortov B.A."/>
            <person name="Rivero F."/>
            <person name="Bankier A.T."/>
            <person name="Lehmann R."/>
            <person name="Hamlin N."/>
            <person name="Davies R."/>
            <person name="Gaudet P."/>
            <person name="Fey P."/>
            <person name="Pilcher K."/>
            <person name="Chen G."/>
            <person name="Saunders D."/>
            <person name="Sodergren E.J."/>
            <person name="Davis P."/>
            <person name="Kerhornou A."/>
            <person name="Nie X."/>
            <person name="Hall N."/>
            <person name="Anjard C."/>
            <person name="Hemphill L."/>
            <person name="Bason N."/>
            <person name="Farbrother P."/>
            <person name="Desany B."/>
            <person name="Just E."/>
            <person name="Morio T."/>
            <person name="Rost R."/>
            <person name="Churcher C.M."/>
            <person name="Cooper J."/>
            <person name="Haydock S."/>
            <person name="van Driessche N."/>
            <person name="Cronin A."/>
            <person name="Goodhead I."/>
            <person name="Muzny D.M."/>
            <person name="Mourier T."/>
            <person name="Pain A."/>
            <person name="Lu M."/>
            <person name="Harper D."/>
            <person name="Lindsay R."/>
            <person name="Hauser H."/>
            <person name="James K.D."/>
            <person name="Quiles M."/>
            <person name="Madan Babu M."/>
            <person name="Saito T."/>
            <person name="Buchrieser C."/>
            <person name="Wardroper A."/>
            <person name="Felder M."/>
            <person name="Thangavelu M."/>
            <person name="Johnson D."/>
            <person name="Knights A."/>
            <person name="Loulseged H."/>
            <person name="Mungall K.L."/>
            <person name="Oliver K."/>
            <person name="Price C."/>
            <person name="Quail M.A."/>
            <person name="Urushihara H."/>
            <person name="Hernandez J."/>
            <person name="Rabbinowitsch E."/>
            <person name="Steffen D."/>
            <person name="Sanders M."/>
            <person name="Ma J."/>
            <person name="Kohara Y."/>
            <person name="Sharp S."/>
            <person name="Simmonds M.N."/>
            <person name="Spiegler S."/>
            <person name="Tivey A."/>
            <person name="Sugano S."/>
            <person name="White B."/>
            <person name="Walker D."/>
            <person name="Woodward J.R."/>
            <person name="Winckler T."/>
            <person name="Tanaka Y."/>
            <person name="Shaulsky G."/>
            <person name="Schleicher M."/>
            <person name="Weinstock G.M."/>
            <person name="Rosenthal A."/>
            <person name="Cox E.C."/>
            <person name="Chisholm R.L."/>
            <person name="Gibbs R.A."/>
            <person name="Loomis W.F."/>
            <person name="Platzer M."/>
            <person name="Kay R.R."/>
            <person name="Williams J.G."/>
            <person name="Dear P.H."/>
            <person name="Noegel A.A."/>
            <person name="Barrell B.G."/>
            <person name="Kuspa A."/>
        </authorList>
    </citation>
    <scope>NUCLEOTIDE SEQUENCE [LARGE SCALE GENOMIC DNA]</scope>
    <source>
        <strain>AX4</strain>
    </source>
</reference>
<reference key="2">
    <citation type="submission" date="1996-08" db="EMBL/GenBank/DDBJ databases">
        <authorList>
            <person name="Loomis W.F."/>
        </authorList>
    </citation>
    <scope>NUCLEOTIDE SEQUENCE [MRNA] OF 283-889</scope>
    <source>
        <strain>AX4</strain>
    </source>
</reference>
<reference key="3">
    <citation type="journal article" date="2003" name="Eukaryot. Cell">
        <title>Changing patterns of gene expression in Dictyostelium prestalk cell subtypes recognized by in situ hybridization with genes from microarray analyses.</title>
        <authorList>
            <person name="Maeda M."/>
            <person name="Sakamoto H."/>
            <person name="Iranfar N."/>
            <person name="Fuller D."/>
            <person name="Maruo T."/>
            <person name="Ogihara S."/>
            <person name="Morio T."/>
            <person name="Urushihara H."/>
            <person name="Tanaka Y."/>
            <person name="Loomis W.F."/>
        </authorList>
    </citation>
    <scope>DEVELOPMENTAL STAGE</scope>
</reference>
<reference key="4">
    <citation type="journal article" date="2012" name="Int. J. Dev. Biol.">
        <title>An orthologue of the myelin-gene regulatory transcription factor regulates Dictyostelium prestalk differentiation.</title>
        <authorList>
            <person name="Senoo H."/>
            <person name="Wang H.Y."/>
            <person name="Araki T."/>
            <person name="Williams J.G."/>
            <person name="Fukuzawa M."/>
        </authorList>
    </citation>
    <scope>FUNCTION</scope>
    <scope>DISRUPTION PHENOTYPE</scope>
    <scope>MUTAGENESIS OF ARG-376 AND ARG-460</scope>
    <scope>IDENTIFICATION BY MASS SPECTROMETRY</scope>
</reference>
<organism>
    <name type="scientific">Dictyostelium discoideum</name>
    <name type="common">Social amoeba</name>
    <dbReference type="NCBI Taxonomy" id="44689"/>
    <lineage>
        <taxon>Eukaryota</taxon>
        <taxon>Amoebozoa</taxon>
        <taxon>Evosea</taxon>
        <taxon>Eumycetozoa</taxon>
        <taxon>Dictyostelia</taxon>
        <taxon>Dictyosteliales</taxon>
        <taxon>Dictyosteliaceae</taxon>
        <taxon>Dictyostelium</taxon>
    </lineage>
</organism>
<proteinExistence type="evidence at protein level"/>
<keyword id="KW-0175">Coiled coil</keyword>
<keyword id="KW-0238">DNA-binding</keyword>
<keyword id="KW-0472">Membrane</keyword>
<keyword id="KW-1185">Reference proteome</keyword>
<keyword id="KW-0804">Transcription</keyword>
<keyword id="KW-0805">Transcription regulation</keyword>
<keyword id="KW-0812">Transmembrane</keyword>
<keyword id="KW-1133">Transmembrane helix</keyword>
<comment type="function">
    <text evidence="6">Transcription factor which acts as a key regulator of pstA (prestalk-A) cells differentiation. Essential for ecmA-specific gene expression.</text>
</comment>
<comment type="subcellular location">
    <subcellularLocation>
        <location evidence="7">Membrane</location>
        <topology evidence="7">Single-pass membrane protein</topology>
    </subcellularLocation>
</comment>
<comment type="developmental stage">
    <text evidence="5">Do not show cell-type-specific expression.</text>
</comment>
<comment type="disruption phenotype">
    <text evidence="6">Null cells are delayed in multicellular development and highly defective in pstA-specific gene expression.</text>
</comment>
<evidence type="ECO:0000255" key="1"/>
<evidence type="ECO:0000255" key="2">
    <source>
        <dbReference type="PROSITE-ProRule" id="PRU00850"/>
    </source>
</evidence>
<evidence type="ECO:0000255" key="3">
    <source>
        <dbReference type="PROSITE-ProRule" id="PRU01025"/>
    </source>
</evidence>
<evidence type="ECO:0000256" key="4">
    <source>
        <dbReference type="SAM" id="MobiDB-lite"/>
    </source>
</evidence>
<evidence type="ECO:0000269" key="5">
    <source>
    </source>
</evidence>
<evidence type="ECO:0000269" key="6">
    <source>
    </source>
</evidence>
<evidence type="ECO:0000305" key="7"/>
<name>MRFA_DICDI</name>